<gene>
    <name evidence="1" type="primary">pgk</name>
    <name type="ordered locus">Rsph17029_1152</name>
</gene>
<feature type="chain" id="PRO_1000058045" description="Phosphoglycerate kinase">
    <location>
        <begin position="1"/>
        <end position="397"/>
    </location>
</feature>
<feature type="binding site" evidence="1">
    <location>
        <begin position="21"/>
        <end position="23"/>
    </location>
    <ligand>
        <name>substrate</name>
    </ligand>
</feature>
<feature type="binding site" evidence="1">
    <location>
        <position position="36"/>
    </location>
    <ligand>
        <name>substrate</name>
    </ligand>
</feature>
<feature type="binding site" evidence="1">
    <location>
        <begin position="59"/>
        <end position="62"/>
    </location>
    <ligand>
        <name>substrate</name>
    </ligand>
</feature>
<feature type="binding site" evidence="1">
    <location>
        <position position="119"/>
    </location>
    <ligand>
        <name>substrate</name>
    </ligand>
</feature>
<feature type="binding site" evidence="1">
    <location>
        <position position="152"/>
    </location>
    <ligand>
        <name>substrate</name>
    </ligand>
</feature>
<feature type="binding site" evidence="1">
    <location>
        <position position="202"/>
    </location>
    <ligand>
        <name>ATP</name>
        <dbReference type="ChEBI" id="CHEBI:30616"/>
    </ligand>
</feature>
<feature type="binding site" evidence="1">
    <location>
        <position position="324"/>
    </location>
    <ligand>
        <name>ATP</name>
        <dbReference type="ChEBI" id="CHEBI:30616"/>
    </ligand>
</feature>
<feature type="binding site" evidence="1">
    <location>
        <begin position="354"/>
        <end position="357"/>
    </location>
    <ligand>
        <name>ATP</name>
        <dbReference type="ChEBI" id="CHEBI:30616"/>
    </ligand>
</feature>
<protein>
    <recommendedName>
        <fullName evidence="1">Phosphoglycerate kinase</fullName>
        <ecNumber evidence="1">2.7.2.3</ecNumber>
    </recommendedName>
</protein>
<comment type="catalytic activity">
    <reaction evidence="1">
        <text>(2R)-3-phosphoglycerate + ATP = (2R)-3-phospho-glyceroyl phosphate + ADP</text>
        <dbReference type="Rhea" id="RHEA:14801"/>
        <dbReference type="ChEBI" id="CHEBI:30616"/>
        <dbReference type="ChEBI" id="CHEBI:57604"/>
        <dbReference type="ChEBI" id="CHEBI:58272"/>
        <dbReference type="ChEBI" id="CHEBI:456216"/>
        <dbReference type="EC" id="2.7.2.3"/>
    </reaction>
</comment>
<comment type="pathway">
    <text evidence="1">Carbohydrate degradation; glycolysis; pyruvate from D-glyceraldehyde 3-phosphate: step 2/5.</text>
</comment>
<comment type="subunit">
    <text evidence="1">Monomer.</text>
</comment>
<comment type="subcellular location">
    <subcellularLocation>
        <location evidence="1">Cytoplasm</location>
    </subcellularLocation>
</comment>
<comment type="similarity">
    <text evidence="1">Belongs to the phosphoglycerate kinase family.</text>
</comment>
<evidence type="ECO:0000255" key="1">
    <source>
        <dbReference type="HAMAP-Rule" id="MF_00145"/>
    </source>
</evidence>
<sequence>MGWKTLDDMDLAGKVVLVRVDVNVPMENGEVTDATRIEKIVPTVEDILKKGGKPVLLAHFGRPKGKVVDEMSLRLVLPALQKALPGTKVSFAADCVGPEPEQAVAAMLEGEVLLLENTRFHAGEEKNDPELAAAMAKLGQVYVNDAFSAAHRAHASTEGLARLLPSAAGRLMEAELKALEAALGHPERPVVAVVGGAKVSTKLDLLGNLVGRVDHLVIGGGMANTFLVAQGIEVGKSLAERDMADTAREILSKAKAAGCTIHLPLDVVVAREFKAGAANETVETSACPADAMILDAGPKTVAALSEVFASAKTLIWNGPLGAFEIEPFDAATNAAALQVAQLTKAGQLISVAGGGDTVAALNKAGAAEGFSYISTAGGAFLEWMEGKELPGVAALTV</sequence>
<reference key="1">
    <citation type="submission" date="2007-02" db="EMBL/GenBank/DDBJ databases">
        <title>Complete sequence of chromosome 1 of Rhodobacter sphaeroides ATCC 17029.</title>
        <authorList>
            <person name="Copeland A."/>
            <person name="Lucas S."/>
            <person name="Lapidus A."/>
            <person name="Barry K."/>
            <person name="Detter J.C."/>
            <person name="Glavina del Rio T."/>
            <person name="Hammon N."/>
            <person name="Israni S."/>
            <person name="Dalin E."/>
            <person name="Tice H."/>
            <person name="Pitluck S."/>
            <person name="Kiss H."/>
            <person name="Brettin T."/>
            <person name="Bruce D."/>
            <person name="Han C."/>
            <person name="Tapia R."/>
            <person name="Gilna P."/>
            <person name="Schmutz J."/>
            <person name="Larimer F."/>
            <person name="Land M."/>
            <person name="Hauser L."/>
            <person name="Kyrpides N."/>
            <person name="Mikhailova N."/>
            <person name="Richardson P."/>
            <person name="Mackenzie C."/>
            <person name="Choudhary M."/>
            <person name="Donohue T.J."/>
            <person name="Kaplan S."/>
        </authorList>
    </citation>
    <scope>NUCLEOTIDE SEQUENCE [LARGE SCALE GENOMIC DNA]</scope>
    <source>
        <strain>ATCC 17029 / ATH 2.4.9</strain>
    </source>
</reference>
<keyword id="KW-0067">ATP-binding</keyword>
<keyword id="KW-0963">Cytoplasm</keyword>
<keyword id="KW-0324">Glycolysis</keyword>
<keyword id="KW-0418">Kinase</keyword>
<keyword id="KW-0547">Nucleotide-binding</keyword>
<keyword id="KW-0808">Transferase</keyword>
<proteinExistence type="inferred from homology"/>
<accession>A3PIU6</accession>
<name>PGK_CERS1</name>
<organism>
    <name type="scientific">Cereibacter sphaeroides (strain ATCC 17029 / ATH 2.4.9)</name>
    <name type="common">Rhodobacter sphaeroides</name>
    <dbReference type="NCBI Taxonomy" id="349101"/>
    <lineage>
        <taxon>Bacteria</taxon>
        <taxon>Pseudomonadati</taxon>
        <taxon>Pseudomonadota</taxon>
        <taxon>Alphaproteobacteria</taxon>
        <taxon>Rhodobacterales</taxon>
        <taxon>Paracoccaceae</taxon>
        <taxon>Cereibacter</taxon>
    </lineage>
</organism>
<dbReference type="EC" id="2.7.2.3" evidence="1"/>
<dbReference type="EMBL" id="CP000577">
    <property type="protein sequence ID" value="ABN76262.1"/>
    <property type="molecule type" value="Genomic_DNA"/>
</dbReference>
<dbReference type="RefSeq" id="WP_011840836.1">
    <property type="nucleotide sequence ID" value="NC_009049.1"/>
</dbReference>
<dbReference type="SMR" id="A3PIU6"/>
<dbReference type="KEGG" id="rsh:Rsph17029_1152"/>
<dbReference type="HOGENOM" id="CLU_025427_0_2_5"/>
<dbReference type="UniPathway" id="UPA00109">
    <property type="reaction ID" value="UER00185"/>
</dbReference>
<dbReference type="GO" id="GO:0005829">
    <property type="term" value="C:cytosol"/>
    <property type="evidence" value="ECO:0007669"/>
    <property type="project" value="TreeGrafter"/>
</dbReference>
<dbReference type="GO" id="GO:0043531">
    <property type="term" value="F:ADP binding"/>
    <property type="evidence" value="ECO:0007669"/>
    <property type="project" value="TreeGrafter"/>
</dbReference>
<dbReference type="GO" id="GO:0005524">
    <property type="term" value="F:ATP binding"/>
    <property type="evidence" value="ECO:0007669"/>
    <property type="project" value="UniProtKB-KW"/>
</dbReference>
<dbReference type="GO" id="GO:0004618">
    <property type="term" value="F:phosphoglycerate kinase activity"/>
    <property type="evidence" value="ECO:0007669"/>
    <property type="project" value="UniProtKB-UniRule"/>
</dbReference>
<dbReference type="GO" id="GO:0006094">
    <property type="term" value="P:gluconeogenesis"/>
    <property type="evidence" value="ECO:0007669"/>
    <property type="project" value="TreeGrafter"/>
</dbReference>
<dbReference type="GO" id="GO:0006096">
    <property type="term" value="P:glycolytic process"/>
    <property type="evidence" value="ECO:0007669"/>
    <property type="project" value="UniProtKB-UniRule"/>
</dbReference>
<dbReference type="FunFam" id="3.40.50.1260:FF:000006">
    <property type="entry name" value="Phosphoglycerate kinase"/>
    <property type="match status" value="1"/>
</dbReference>
<dbReference type="FunFam" id="3.40.50.1260:FF:000031">
    <property type="entry name" value="Phosphoglycerate kinase 1"/>
    <property type="match status" value="1"/>
</dbReference>
<dbReference type="Gene3D" id="3.40.50.1260">
    <property type="entry name" value="Phosphoglycerate kinase, N-terminal domain"/>
    <property type="match status" value="2"/>
</dbReference>
<dbReference type="HAMAP" id="MF_00145">
    <property type="entry name" value="Phosphoglyc_kinase"/>
    <property type="match status" value="1"/>
</dbReference>
<dbReference type="InterPro" id="IPR001576">
    <property type="entry name" value="Phosphoglycerate_kinase"/>
</dbReference>
<dbReference type="InterPro" id="IPR015911">
    <property type="entry name" value="Phosphoglycerate_kinase_CS"/>
</dbReference>
<dbReference type="InterPro" id="IPR015824">
    <property type="entry name" value="Phosphoglycerate_kinase_N"/>
</dbReference>
<dbReference type="InterPro" id="IPR036043">
    <property type="entry name" value="Phosphoglycerate_kinase_sf"/>
</dbReference>
<dbReference type="PANTHER" id="PTHR11406">
    <property type="entry name" value="PHOSPHOGLYCERATE KINASE"/>
    <property type="match status" value="1"/>
</dbReference>
<dbReference type="PANTHER" id="PTHR11406:SF23">
    <property type="entry name" value="PHOSPHOGLYCERATE KINASE 1, CHLOROPLASTIC-RELATED"/>
    <property type="match status" value="1"/>
</dbReference>
<dbReference type="Pfam" id="PF00162">
    <property type="entry name" value="PGK"/>
    <property type="match status" value="1"/>
</dbReference>
<dbReference type="PIRSF" id="PIRSF000724">
    <property type="entry name" value="Pgk"/>
    <property type="match status" value="1"/>
</dbReference>
<dbReference type="PRINTS" id="PR00477">
    <property type="entry name" value="PHGLYCKINASE"/>
</dbReference>
<dbReference type="SUPFAM" id="SSF53748">
    <property type="entry name" value="Phosphoglycerate kinase"/>
    <property type="match status" value="1"/>
</dbReference>
<dbReference type="PROSITE" id="PS00111">
    <property type="entry name" value="PGLYCERATE_KINASE"/>
    <property type="match status" value="1"/>
</dbReference>